<sequence length="1564" mass="175385">MSNKEVKAILKNARDAIRNKDYKEVLKQCKAVLKLEKNNYNAWVFIGLAASELEQPDQAQAAYRKAVEIEPDQLLAWQGLGNLYEKVNQKDFKEDLPNVYQKLLELYRSSDKQKWYEICKKLSDLYQQEKNYVPAAHTWHQLIKMKEDESIKSNELYPLWKRMTELLSEDVEKLDNETQELLLNAFESAIPCIEEIPSEEHQMLYQHYITCLSKLPLEEAKLKKVCENMITVYPSLIYPLKVLALHYIKSGDITEEAICCYSKLLELDPLNGPGLIGMGIKALHDRNYVLASENLSKGLKDVNCCPSAWCCLAQAQLKIHKYAEALVSCDQAINGATQDNSAPQSVVQKDAAFRLKAEALVEGNSSNNAEEALKALEQISNADNNPEICAIKGQAYLKKGCIDVASKISEELRLSHEHLAEGHFLEGLLQYIQKNYSAAEISLQYALERKPENAVYHYYLGLNYWFMSKETRRDKTKAVTQFLKAAKMDPFMSRAFYYLGHYYSEVAGDKSRARGCYKKAFELDDSDGEAGAAAVDLSMELGDMDVALAILTSVTERADAGTAKWAWLRRGLFYLRVGQHSKSVSDLHAALRADPKDSNCWECLGEAYLSRGGYTTALKSFMKASELNPDSIYSVYKIASIKQILGTYKEAVNEYQQILMKSGEYVPALKGLGECHLMLAKSALSDFLDLKAVDAIEKAIEFLARAIRLRPDLLCLWKLLGDACTCIYAVTHSSVKVNVLGILLGNDEEQQLLNKPEVLALGGRCYGRALRIQSTANLWCDLGINYYYQSQHLMGYDSLTNDASELLEKSQQCIKKAVMVESGNHQFWNALGVVSCSKGMGNNALAQHAFIKSIHCEQNNVAAWTNLGALYLMNGNIELSHQAFKVAQSLDPLYVRCWIGQALIAETVGSHETMDLFRHTTELSMHVEGAKGYAHWVCTTLQDKNNRNTALYRYNIVQMNAITAAHLALSKYTERIQNDRTAFEMLGYLNEHLNLKKQASESYRRVVSILQEREDKESSNSALQHYGRSLCAVGQYQEAIQTFSSTPLTEFDDLTGIALAFFKKGLLQESMKAYKQALSVAKSDQEKAHILTALAIIEYNRGEFDTAKTLLFKCSVLKEPSIESLQSLCALGLAKRDVTLATAALNELLKHVKIKDNIYERCLITSAIYVLQGRNEAAQRQACRDIHSHPGNPELWAFLSRLVPQHVPRDAKGGAVAGTVAYTLNINHSKKALLYAAVNELSAGALLADDRKKNALNTLQRAAHFFPDNPAVWASLMAACEAENTASYLNKKSNKKTDLSLTFLASVKSKTEGMKAVPASYTQTLRSWSLCQAICALKDQGRISEAEALCTKSIQNCPDQTPFFLLLRQIQCKQLQSQAQISEPVLEELKKTVLSNFTSHNAWHWLAEVYQSLGMMMDAEMCYRKSLQLASQQGNWNGKLSSLLRLALLALKVCMAKIPDSRWPGLLQEATSEVLKMTFCPLAVLLQGILQFSTKGSRKTRQLLEKVVYQSGCSDTIAFVARWYLLRHLHGKNDDQLVEVLLDNAKAHGDTRIIDLHKQLTESS</sequence>
<organism>
    <name type="scientific">Xenopus laevis</name>
    <name type="common">African clawed frog</name>
    <dbReference type="NCBI Taxonomy" id="8355"/>
    <lineage>
        <taxon>Eukaryota</taxon>
        <taxon>Metazoa</taxon>
        <taxon>Chordata</taxon>
        <taxon>Craniata</taxon>
        <taxon>Vertebrata</taxon>
        <taxon>Euteleostomi</taxon>
        <taxon>Amphibia</taxon>
        <taxon>Batrachia</taxon>
        <taxon>Anura</taxon>
        <taxon>Pipoidea</taxon>
        <taxon>Pipidae</taxon>
        <taxon>Xenopodinae</taxon>
        <taxon>Xenopus</taxon>
        <taxon>Xenopus</taxon>
    </lineage>
</organism>
<proteinExistence type="evidence at transcript level"/>
<gene>
    <name type="primary">ttc37</name>
</gene>
<dbReference type="EMBL" id="BC076821">
    <property type="protein sequence ID" value="AAH76821.1"/>
    <property type="molecule type" value="mRNA"/>
</dbReference>
<dbReference type="RefSeq" id="NP_001086571.1">
    <property type="nucleotide sequence ID" value="NM_001093102.1"/>
</dbReference>
<dbReference type="SMR" id="Q6DFB8"/>
<dbReference type="IntAct" id="Q6DFB8">
    <property type="interactions" value="3"/>
</dbReference>
<dbReference type="DNASU" id="446406"/>
<dbReference type="GeneID" id="446406"/>
<dbReference type="KEGG" id="xla:446406"/>
<dbReference type="AGR" id="Xenbase:XB-GENE-5929219"/>
<dbReference type="CTD" id="446406"/>
<dbReference type="Xenbase" id="XB-GENE-5929219">
    <property type="gene designation" value="skic3.L"/>
</dbReference>
<dbReference type="OrthoDB" id="421075at2759"/>
<dbReference type="Proteomes" id="UP000186698">
    <property type="component" value="Chromosome 1L"/>
</dbReference>
<dbReference type="Bgee" id="446406">
    <property type="expression patterns" value="Expressed in muscle tissue and 19 other cell types or tissues"/>
</dbReference>
<dbReference type="GO" id="GO:0005737">
    <property type="term" value="C:cytoplasm"/>
    <property type="evidence" value="ECO:0000250"/>
    <property type="project" value="UniProtKB"/>
</dbReference>
<dbReference type="GO" id="GO:0000791">
    <property type="term" value="C:euchromatin"/>
    <property type="evidence" value="ECO:0000250"/>
    <property type="project" value="UniProtKB"/>
</dbReference>
<dbReference type="GO" id="GO:0005634">
    <property type="term" value="C:nucleus"/>
    <property type="evidence" value="ECO:0000250"/>
    <property type="project" value="UniProtKB"/>
</dbReference>
<dbReference type="GO" id="GO:0055087">
    <property type="term" value="C:Ski complex"/>
    <property type="evidence" value="ECO:0000250"/>
    <property type="project" value="UniProtKB"/>
</dbReference>
<dbReference type="GO" id="GO:0000956">
    <property type="term" value="P:nuclear-transcribed mRNA catabolic process"/>
    <property type="evidence" value="ECO:0000318"/>
    <property type="project" value="GO_Central"/>
</dbReference>
<dbReference type="FunFam" id="1.25.40.10:FF:000585">
    <property type="entry name" value="Tetratricopeptide repeat domain 37"/>
    <property type="match status" value="1"/>
</dbReference>
<dbReference type="FunFam" id="1.25.40.10:FF:003644">
    <property type="entry name" value="Tetratricopeptide repeat protein 37"/>
    <property type="match status" value="1"/>
</dbReference>
<dbReference type="FunFam" id="1.25.40.10:FF:003650">
    <property type="entry name" value="Tetratricopeptide repeat protein 37"/>
    <property type="match status" value="1"/>
</dbReference>
<dbReference type="Gene3D" id="1.25.40.10">
    <property type="entry name" value="Tetratricopeptide repeat domain"/>
    <property type="match status" value="7"/>
</dbReference>
<dbReference type="InterPro" id="IPR039226">
    <property type="entry name" value="Ski3/TTC37"/>
</dbReference>
<dbReference type="InterPro" id="IPR011990">
    <property type="entry name" value="TPR-like_helical_dom_sf"/>
</dbReference>
<dbReference type="InterPro" id="IPR019734">
    <property type="entry name" value="TPR_rpt"/>
</dbReference>
<dbReference type="PANTHER" id="PTHR15704">
    <property type="entry name" value="SUPERKILLER 3 PROTEIN-RELATED"/>
    <property type="match status" value="1"/>
</dbReference>
<dbReference type="PANTHER" id="PTHR15704:SF7">
    <property type="entry name" value="SUPERKILLER COMPLEX PROTEIN 3"/>
    <property type="match status" value="1"/>
</dbReference>
<dbReference type="Pfam" id="PF13432">
    <property type="entry name" value="TPR_16"/>
    <property type="match status" value="1"/>
</dbReference>
<dbReference type="Pfam" id="PF13431">
    <property type="entry name" value="TPR_17"/>
    <property type="match status" value="1"/>
</dbReference>
<dbReference type="Pfam" id="PF13181">
    <property type="entry name" value="TPR_8"/>
    <property type="match status" value="2"/>
</dbReference>
<dbReference type="SMART" id="SM00028">
    <property type="entry name" value="TPR"/>
    <property type="match status" value="16"/>
</dbReference>
<dbReference type="SUPFAM" id="SSF48452">
    <property type="entry name" value="TPR-like"/>
    <property type="match status" value="6"/>
</dbReference>
<dbReference type="PROSITE" id="PS50005">
    <property type="entry name" value="TPR"/>
    <property type="match status" value="13"/>
</dbReference>
<dbReference type="PROSITE" id="PS50293">
    <property type="entry name" value="TPR_REGION"/>
    <property type="match status" value="6"/>
</dbReference>
<feature type="chain" id="PRO_0000251723" description="Tetratricopeptide repeat protein 37">
    <location>
        <begin position="1"/>
        <end position="1564"/>
    </location>
</feature>
<feature type="repeat" description="TPR 1">
    <location>
        <begin position="6"/>
        <end position="39"/>
    </location>
</feature>
<feature type="repeat" description="TPR 2">
    <location>
        <begin position="40"/>
        <end position="73"/>
    </location>
</feature>
<feature type="repeat" description="TPR 3">
    <location>
        <begin position="75"/>
        <end position="110"/>
    </location>
</feature>
<feature type="repeat" description="TPR 4">
    <location>
        <begin position="116"/>
        <end position="149"/>
    </location>
</feature>
<feature type="repeat" description="TPR 5">
    <location>
        <begin position="237"/>
        <end position="271"/>
    </location>
</feature>
<feature type="repeat" description="TPR 6">
    <location>
        <begin position="306"/>
        <end position="339"/>
    </location>
</feature>
<feature type="repeat" description="TPR 7">
    <location>
        <begin position="420"/>
        <end position="453"/>
    </location>
</feature>
<feature type="repeat" description="TPR 8">
    <location>
        <begin position="456"/>
        <end position="492"/>
    </location>
</feature>
<feature type="repeat" description="TPR 9">
    <location>
        <begin position="493"/>
        <end position="527"/>
    </location>
</feature>
<feature type="repeat" description="TPR 10">
    <location>
        <begin position="564"/>
        <end position="597"/>
    </location>
</feature>
<feature type="repeat" description="TPR 11">
    <location>
        <begin position="598"/>
        <end position="631"/>
    </location>
</feature>
<feature type="repeat" description="TPR 12">
    <location>
        <begin position="633"/>
        <end position="665"/>
    </location>
</feature>
<feature type="repeat" description="TPR 13">
    <location>
        <begin position="678"/>
        <end position="713"/>
    </location>
</feature>
<feature type="repeat" description="TPR 14">
    <location>
        <begin position="743"/>
        <end position="776"/>
    </location>
</feature>
<feature type="repeat" description="TPR 15">
    <location>
        <begin position="861"/>
        <end position="894"/>
    </location>
</feature>
<feature type="repeat" description="TPR 16">
    <location>
        <begin position="980"/>
        <end position="1013"/>
    </location>
</feature>
<feature type="repeat" description="TPR 17">
    <location>
        <begin position="1020"/>
        <end position="1050"/>
    </location>
</feature>
<feature type="repeat" description="TPR 18">
    <location>
        <begin position="1051"/>
        <end position="1084"/>
    </location>
</feature>
<feature type="repeat" description="TPR 19">
    <location>
        <begin position="1400"/>
        <end position="1433"/>
    </location>
</feature>
<keyword id="KW-1185">Reference proteome</keyword>
<keyword id="KW-0677">Repeat</keyword>
<keyword id="KW-0802">TPR repeat</keyword>
<protein>
    <recommendedName>
        <fullName>Tetratricopeptide repeat protein 37</fullName>
        <shortName>TPR repeat protein 37</shortName>
        <shortName>Thespin homolog</shortName>
    </recommendedName>
</protein>
<accession>Q6DFB8</accession>
<name>TTC37_XENLA</name>
<reference key="1">
    <citation type="submission" date="2004-07" db="EMBL/GenBank/DDBJ databases">
        <authorList>
            <consortium name="NIH - Xenopus Gene Collection (XGC) project"/>
        </authorList>
    </citation>
    <scope>NUCLEOTIDE SEQUENCE [LARGE SCALE MRNA]</scope>
    <source>
        <tissue>Oocyte</tissue>
    </source>
</reference>